<gene>
    <name evidence="1" type="primary">rplR</name>
    <name type="ordered locus">RBAM_001570</name>
</gene>
<protein>
    <recommendedName>
        <fullName evidence="1">Large ribosomal subunit protein uL18</fullName>
    </recommendedName>
    <alternativeName>
        <fullName evidence="3">50S ribosomal protein L18</fullName>
    </alternativeName>
</protein>
<keyword id="KW-0687">Ribonucleoprotein</keyword>
<keyword id="KW-0689">Ribosomal protein</keyword>
<keyword id="KW-0694">RNA-binding</keyword>
<keyword id="KW-0699">rRNA-binding</keyword>
<name>RL18_BACVZ</name>
<dbReference type="EMBL" id="CP000560">
    <property type="protein sequence ID" value="ABS72580.1"/>
    <property type="molecule type" value="Genomic_DNA"/>
</dbReference>
<dbReference type="RefSeq" id="WP_003156492.1">
    <property type="nucleotide sequence ID" value="NC_009725.2"/>
</dbReference>
<dbReference type="SMR" id="A7Z0Q4"/>
<dbReference type="GeneID" id="93079296"/>
<dbReference type="KEGG" id="bay:RBAM_001570"/>
<dbReference type="HOGENOM" id="CLU_098841_0_1_9"/>
<dbReference type="Proteomes" id="UP000001120">
    <property type="component" value="Chromosome"/>
</dbReference>
<dbReference type="GO" id="GO:0022625">
    <property type="term" value="C:cytosolic large ribosomal subunit"/>
    <property type="evidence" value="ECO:0007669"/>
    <property type="project" value="TreeGrafter"/>
</dbReference>
<dbReference type="GO" id="GO:0008097">
    <property type="term" value="F:5S rRNA binding"/>
    <property type="evidence" value="ECO:0007669"/>
    <property type="project" value="TreeGrafter"/>
</dbReference>
<dbReference type="GO" id="GO:0003735">
    <property type="term" value="F:structural constituent of ribosome"/>
    <property type="evidence" value="ECO:0007669"/>
    <property type="project" value="InterPro"/>
</dbReference>
<dbReference type="GO" id="GO:0006412">
    <property type="term" value="P:translation"/>
    <property type="evidence" value="ECO:0007669"/>
    <property type="project" value="UniProtKB-UniRule"/>
</dbReference>
<dbReference type="CDD" id="cd00432">
    <property type="entry name" value="Ribosomal_L18_L5e"/>
    <property type="match status" value="1"/>
</dbReference>
<dbReference type="FunFam" id="3.30.420.100:FF:000001">
    <property type="entry name" value="50S ribosomal protein L18"/>
    <property type="match status" value="1"/>
</dbReference>
<dbReference type="Gene3D" id="3.30.420.100">
    <property type="match status" value="1"/>
</dbReference>
<dbReference type="HAMAP" id="MF_01337_B">
    <property type="entry name" value="Ribosomal_uL18_B"/>
    <property type="match status" value="1"/>
</dbReference>
<dbReference type="InterPro" id="IPR004389">
    <property type="entry name" value="Ribosomal_uL18_bac-type"/>
</dbReference>
<dbReference type="InterPro" id="IPR005484">
    <property type="entry name" value="Ribosomal_uL18_bac/euk"/>
</dbReference>
<dbReference type="NCBIfam" id="TIGR00060">
    <property type="entry name" value="L18_bact"/>
    <property type="match status" value="1"/>
</dbReference>
<dbReference type="PANTHER" id="PTHR12899">
    <property type="entry name" value="39S RIBOSOMAL PROTEIN L18, MITOCHONDRIAL"/>
    <property type="match status" value="1"/>
</dbReference>
<dbReference type="PANTHER" id="PTHR12899:SF3">
    <property type="entry name" value="LARGE RIBOSOMAL SUBUNIT PROTEIN UL18M"/>
    <property type="match status" value="1"/>
</dbReference>
<dbReference type="Pfam" id="PF00861">
    <property type="entry name" value="Ribosomal_L18p"/>
    <property type="match status" value="1"/>
</dbReference>
<dbReference type="SUPFAM" id="SSF53137">
    <property type="entry name" value="Translational machinery components"/>
    <property type="match status" value="1"/>
</dbReference>
<comment type="function">
    <text evidence="1">This is one of the proteins that bind and probably mediate the attachment of the 5S RNA into the large ribosomal subunit, where it forms part of the central protuberance.</text>
</comment>
<comment type="subunit">
    <text evidence="1">Part of the 50S ribosomal subunit; part of the 5S rRNA/L5/L18/L25 subcomplex. Contacts the 5S and 23S rRNAs.</text>
</comment>
<comment type="similarity">
    <text evidence="1">Belongs to the universal ribosomal protein uL18 family.</text>
</comment>
<evidence type="ECO:0000255" key="1">
    <source>
        <dbReference type="HAMAP-Rule" id="MF_01337"/>
    </source>
</evidence>
<evidence type="ECO:0000256" key="2">
    <source>
        <dbReference type="SAM" id="MobiDB-lite"/>
    </source>
</evidence>
<evidence type="ECO:0000305" key="3"/>
<sequence>MITKTSKNAARQKRHARVRAKLSGTAERPRLNVFRSNKHIYAQIIDDVNGVTLASASTLDKDLNVESTGDSAAAAKVGELVAKRASEKGVSDVVFDRGGYLYHGRVKALADAAREAGLKF</sequence>
<accession>A7Z0Q4</accession>
<reference key="1">
    <citation type="journal article" date="2007" name="Nat. Biotechnol.">
        <title>Comparative analysis of the complete genome sequence of the plant growth-promoting bacterium Bacillus amyloliquefaciens FZB42.</title>
        <authorList>
            <person name="Chen X.H."/>
            <person name="Koumoutsi A."/>
            <person name="Scholz R."/>
            <person name="Eisenreich A."/>
            <person name="Schneider K."/>
            <person name="Heinemeyer I."/>
            <person name="Morgenstern B."/>
            <person name="Voss B."/>
            <person name="Hess W.R."/>
            <person name="Reva O."/>
            <person name="Junge H."/>
            <person name="Voigt B."/>
            <person name="Jungblut P.R."/>
            <person name="Vater J."/>
            <person name="Suessmuth R."/>
            <person name="Liesegang H."/>
            <person name="Strittmatter A."/>
            <person name="Gottschalk G."/>
            <person name="Borriss R."/>
        </authorList>
    </citation>
    <scope>NUCLEOTIDE SEQUENCE [LARGE SCALE GENOMIC DNA]</scope>
    <source>
        <strain>DSM 23117 / BGSC 10A6 / LMG 26770 / FZB42</strain>
    </source>
</reference>
<organism>
    <name type="scientific">Bacillus velezensis (strain DSM 23117 / BGSC 10A6 / LMG 26770 / FZB42)</name>
    <name type="common">Bacillus amyloliquefaciens subsp. plantarum</name>
    <dbReference type="NCBI Taxonomy" id="326423"/>
    <lineage>
        <taxon>Bacteria</taxon>
        <taxon>Bacillati</taxon>
        <taxon>Bacillota</taxon>
        <taxon>Bacilli</taxon>
        <taxon>Bacillales</taxon>
        <taxon>Bacillaceae</taxon>
        <taxon>Bacillus</taxon>
        <taxon>Bacillus amyloliquefaciens group</taxon>
    </lineage>
</organism>
<proteinExistence type="inferred from homology"/>
<feature type="chain" id="PRO_1000052987" description="Large ribosomal subunit protein uL18">
    <location>
        <begin position="1"/>
        <end position="120"/>
    </location>
</feature>
<feature type="region of interest" description="Disordered" evidence="2">
    <location>
        <begin position="1"/>
        <end position="22"/>
    </location>
</feature>
<feature type="compositionally biased region" description="Basic residues" evidence="2">
    <location>
        <begin position="10"/>
        <end position="20"/>
    </location>
</feature>